<reference key="1">
    <citation type="journal article" date="1993" name="J. Mol. Endocrinol.">
        <title>Characterization of the chicken preprogonadotrophin-releasing hormone-I gene.</title>
        <authorList>
            <person name="Dunn I.C."/>
            <person name="Chen Y."/>
            <person name="Hook C."/>
            <person name="Sharp P.J."/>
            <person name="Sang H.M."/>
        </authorList>
    </citation>
    <scope>NUCLEOTIDE SEQUENCE [GENOMIC DNA]</scope>
    <source>
        <strain>White leghorn</strain>
    </source>
</reference>
<reference key="2">
    <citation type="journal article" date="1982" name="J. Biol. Chem.">
        <title>Structure of chicken hypothalamic luteinizing hormone-releasing hormone. II. Isolation and characterization.</title>
        <authorList>
            <person name="King J.A."/>
            <person name="Millar R.P."/>
        </authorList>
    </citation>
    <scope>PROTEIN SEQUENCE OF 24-33</scope>
    <scope>PYROGLUTAMATE FORMATION AT GLN-24</scope>
    <scope>AMIDATION AT GLY-33</scope>
    <source>
        <tissue>Hypothalamus</tissue>
    </source>
</reference>
<reference key="3">
    <citation type="journal article" date="1982" name="S. Afr. J. Sci.">
        <title>Structure of avian hypothalamic gonadotrophin-releasing hormone.</title>
        <authorList>
            <person name="King J.A."/>
            <person name="Millar R.P."/>
        </authorList>
    </citation>
    <scope>PROTEIN SEQUENCE OF 24-33</scope>
    <source>
        <tissue>Hypothalamus</tissue>
    </source>
</reference>
<reference key="4">
    <citation type="journal article" date="1982" name="J. Biol. Chem.">
        <title>Structure of chicken hypothalamic luteinizing hormone-releasing hormone. I. Structural determination on partially purified material.</title>
        <authorList>
            <person name="King J.A."/>
            <person name="Millar R.P."/>
        </authorList>
    </citation>
    <scope>SYNTHESIS OF 24-33</scope>
</reference>
<protein>
    <recommendedName>
        <fullName>Progonadoliberin-1</fullName>
    </recommendedName>
    <alternativeName>
        <fullName>Progonadoliberin I</fullName>
    </alternativeName>
    <component>
        <recommendedName>
            <fullName>Gonadoliberin-1</fullName>
        </recommendedName>
        <alternativeName>
            <fullName>Gonadoliberin I</fullName>
        </alternativeName>
        <alternativeName>
            <fullName>Gonadotropin-releasing hormone I</fullName>
            <shortName>GnRH-I</shortName>
        </alternativeName>
        <alternativeName>
            <fullName>Luliberin I</fullName>
        </alternativeName>
        <alternativeName>
            <fullName>Luteinizing hormone-releasing hormone I</fullName>
            <shortName>LH-RH I</shortName>
        </alternativeName>
    </component>
    <component>
        <recommendedName>
            <fullName>GnRH-associated peptide 1</fullName>
        </recommendedName>
        <alternativeName>
            <fullName>GnRH-associated peptide I</fullName>
        </alternativeName>
    </component>
</protein>
<keyword id="KW-0027">Amidation</keyword>
<keyword id="KW-0165">Cleavage on pair of basic residues</keyword>
<keyword id="KW-0903">Direct protein sequencing</keyword>
<keyword id="KW-0372">Hormone</keyword>
<keyword id="KW-0873">Pyrrolidone carboxylic acid</keyword>
<keyword id="KW-1185">Reference proteome</keyword>
<keyword id="KW-0964">Secreted</keyword>
<keyword id="KW-0732">Signal</keyword>
<organism>
    <name type="scientific">Gallus gallus</name>
    <name type="common">Chicken</name>
    <dbReference type="NCBI Taxonomy" id="9031"/>
    <lineage>
        <taxon>Eukaryota</taxon>
        <taxon>Metazoa</taxon>
        <taxon>Chordata</taxon>
        <taxon>Craniata</taxon>
        <taxon>Vertebrata</taxon>
        <taxon>Euteleostomi</taxon>
        <taxon>Archelosauria</taxon>
        <taxon>Archosauria</taxon>
        <taxon>Dinosauria</taxon>
        <taxon>Saurischia</taxon>
        <taxon>Theropoda</taxon>
        <taxon>Coelurosauria</taxon>
        <taxon>Aves</taxon>
        <taxon>Neognathae</taxon>
        <taxon>Galloanserae</taxon>
        <taxon>Galliformes</taxon>
        <taxon>Phasianidae</taxon>
        <taxon>Phasianinae</taxon>
        <taxon>Gallus</taxon>
    </lineage>
</organism>
<proteinExistence type="evidence at protein level"/>
<evidence type="ECO:0000269" key="1">
    <source>
    </source>
</evidence>
<evidence type="ECO:0000269" key="2">
    <source ref="3"/>
</evidence>
<evidence type="ECO:0000305" key="3"/>
<name>GON1_CHICK</name>
<dbReference type="EMBL" id="X69491">
    <property type="protein sequence ID" value="CAA49246.1"/>
    <property type="molecule type" value="Genomic_DNA"/>
</dbReference>
<dbReference type="PIR" id="I50644">
    <property type="entry name" value="I50644"/>
</dbReference>
<dbReference type="RefSeq" id="NP_001074346.1">
    <property type="nucleotide sequence ID" value="NM_001080877.1"/>
</dbReference>
<dbReference type="FunCoup" id="P37042">
    <property type="interactions" value="58"/>
</dbReference>
<dbReference type="STRING" id="9031.ENSGALP00000000365"/>
<dbReference type="PaxDb" id="9031-ENSGALP00000000365"/>
<dbReference type="Ensembl" id="ENSGALT00010045671.1">
    <property type="protein sequence ID" value="ENSGALP00010027230.1"/>
    <property type="gene ID" value="ENSGALG00010018891.1"/>
</dbReference>
<dbReference type="GeneID" id="770134"/>
<dbReference type="KEGG" id="gga:770134"/>
<dbReference type="CTD" id="2796"/>
<dbReference type="VEuPathDB" id="HostDB:geneid_770134"/>
<dbReference type="eggNOG" id="ENOG502S8C8">
    <property type="taxonomic scope" value="Eukaryota"/>
</dbReference>
<dbReference type="GeneTree" id="ENSGT00390000008225"/>
<dbReference type="HOGENOM" id="CLU_2412553_0_0_1"/>
<dbReference type="InParanoid" id="P37042"/>
<dbReference type="OMA" id="FECTVHQ"/>
<dbReference type="OrthoDB" id="8716567at2759"/>
<dbReference type="PhylomeDB" id="P37042"/>
<dbReference type="TreeFam" id="TF330934"/>
<dbReference type="Reactome" id="R-GGA-375281">
    <property type="pathway name" value="Hormone ligand-binding receptors"/>
</dbReference>
<dbReference type="Reactome" id="R-GGA-416476">
    <property type="pathway name" value="G alpha (q) signalling events"/>
</dbReference>
<dbReference type="PRO" id="PR:P37042"/>
<dbReference type="Proteomes" id="UP000000539">
    <property type="component" value="Chromosome 22"/>
</dbReference>
<dbReference type="Bgee" id="ENSGALG00000000277">
    <property type="expression patterns" value="Expressed in granulocyte and 10 other cell types or tissues"/>
</dbReference>
<dbReference type="GO" id="GO:0030424">
    <property type="term" value="C:axon"/>
    <property type="evidence" value="ECO:0000314"/>
    <property type="project" value="AgBase"/>
</dbReference>
<dbReference type="GO" id="GO:0005576">
    <property type="term" value="C:extracellular region"/>
    <property type="evidence" value="ECO:0000314"/>
    <property type="project" value="UniProtKB"/>
</dbReference>
<dbReference type="GO" id="GO:0005615">
    <property type="term" value="C:extracellular space"/>
    <property type="evidence" value="ECO:0000250"/>
    <property type="project" value="UniProtKB"/>
</dbReference>
<dbReference type="GO" id="GO:0043204">
    <property type="term" value="C:perikaryon"/>
    <property type="evidence" value="ECO:0000314"/>
    <property type="project" value="AgBase"/>
</dbReference>
<dbReference type="GO" id="GO:0005183">
    <property type="term" value="F:gonadotropin hormone-releasing hormone activity"/>
    <property type="evidence" value="ECO:0000314"/>
    <property type="project" value="UniProtKB"/>
</dbReference>
<dbReference type="GO" id="GO:0031530">
    <property type="term" value="F:gonadotropin-releasing hormone receptor binding"/>
    <property type="evidence" value="ECO:0000314"/>
    <property type="project" value="Roslin"/>
</dbReference>
<dbReference type="GO" id="GO:0032275">
    <property type="term" value="P:luteinizing hormone secretion"/>
    <property type="evidence" value="ECO:0000315"/>
    <property type="project" value="AgBase"/>
</dbReference>
<dbReference type="GO" id="GO:0033686">
    <property type="term" value="P:positive regulation of luteinizing hormone secretion"/>
    <property type="evidence" value="ECO:0000314"/>
    <property type="project" value="AgBase"/>
</dbReference>
<dbReference type="GO" id="GO:0046885">
    <property type="term" value="P:regulation of hormone biosynthetic process"/>
    <property type="evidence" value="ECO:0000304"/>
    <property type="project" value="AgBase"/>
</dbReference>
<dbReference type="GO" id="GO:0023051">
    <property type="term" value="P:regulation of signaling"/>
    <property type="evidence" value="ECO:0000318"/>
    <property type="project" value="GO_Central"/>
</dbReference>
<dbReference type="GO" id="GO:2000843">
    <property type="term" value="P:regulation of testosterone secretion"/>
    <property type="evidence" value="ECO:0000315"/>
    <property type="project" value="AgBase"/>
</dbReference>
<dbReference type="GO" id="GO:0043279">
    <property type="term" value="P:response to alkaloid"/>
    <property type="evidence" value="ECO:0000314"/>
    <property type="project" value="AgBase"/>
</dbReference>
<dbReference type="GO" id="GO:1904014">
    <property type="term" value="P:response to serotonin"/>
    <property type="evidence" value="ECO:0000314"/>
    <property type="project" value="AgBase"/>
</dbReference>
<dbReference type="InterPro" id="IPR002012">
    <property type="entry name" value="GnRH"/>
</dbReference>
<dbReference type="InterPro" id="IPR019792">
    <property type="entry name" value="Gonadoliberin"/>
</dbReference>
<dbReference type="InterPro" id="IPR004079">
    <property type="entry name" value="Gonadoliberin_I_precursor"/>
</dbReference>
<dbReference type="PANTHER" id="PTHR10522">
    <property type="entry name" value="GONADOLIBERIN"/>
    <property type="match status" value="1"/>
</dbReference>
<dbReference type="PANTHER" id="PTHR10522:SF0">
    <property type="entry name" value="PROGONADOLIBERIN-1"/>
    <property type="match status" value="1"/>
</dbReference>
<dbReference type="PRINTS" id="PR01541">
    <property type="entry name" value="GONADOLIBRNI"/>
</dbReference>
<dbReference type="PROSITE" id="PS00473">
    <property type="entry name" value="GNRH"/>
    <property type="match status" value="1"/>
</dbReference>
<sequence>MEKSRKILVGVLLFTASVAICLAQHWSYGLQPGGKRNAENLVESFQEIANEMESLGEGQKAECPGSYQHPRLSDLKETMASLIEGEARRKEI</sequence>
<feature type="signal peptide" evidence="1 2">
    <location>
        <begin position="1"/>
        <end position="23"/>
    </location>
</feature>
<feature type="chain" id="PRO_0000012419" description="Progonadoliberin-1">
    <location>
        <begin position="24"/>
        <end position="92"/>
    </location>
</feature>
<feature type="peptide" id="PRO_0000012420" description="Gonadoliberin-1">
    <location>
        <begin position="24"/>
        <end position="33"/>
    </location>
</feature>
<feature type="peptide" id="PRO_0000012421" description="GnRH-associated peptide 1">
    <location>
        <begin position="37"/>
        <end position="92"/>
    </location>
</feature>
<feature type="modified residue" description="Pyrrolidone carboxylic acid" evidence="1">
    <location>
        <position position="24"/>
    </location>
</feature>
<feature type="modified residue" description="Glycine amide" evidence="1">
    <location>
        <position position="33"/>
    </location>
</feature>
<gene>
    <name type="primary">GNRH1</name>
</gene>
<accession>P37042</accession>
<accession>P20407</accession>
<comment type="function">
    <text>Stimulates the secretion of gonadotropins.</text>
</comment>
<comment type="subcellular location">
    <subcellularLocation>
        <location>Secreted</location>
    </subcellularLocation>
</comment>
<comment type="similarity">
    <text evidence="3">Belongs to the GnRH family.</text>
</comment>